<keyword id="KW-0067">ATP-binding</keyword>
<keyword id="KW-0131">Cell cycle</keyword>
<keyword id="KW-0132">Cell division</keyword>
<keyword id="KW-0133">Cell shape</keyword>
<keyword id="KW-0961">Cell wall biogenesis/degradation</keyword>
<keyword id="KW-0963">Cytoplasm</keyword>
<keyword id="KW-0436">Ligase</keyword>
<keyword id="KW-0460">Magnesium</keyword>
<keyword id="KW-0547">Nucleotide-binding</keyword>
<keyword id="KW-0573">Peptidoglycan synthesis</keyword>
<proteinExistence type="inferred from homology"/>
<protein>
    <recommendedName>
        <fullName evidence="1">UDP-N-acetylmuramoyl-L-alanyl-D-glutamate--2,6-diaminopimelate ligase</fullName>
        <ecNumber evidence="1">6.3.2.13</ecNumber>
    </recommendedName>
    <alternativeName>
        <fullName evidence="1">Meso-A2pm-adding enzyme</fullName>
    </alternativeName>
    <alternativeName>
        <fullName evidence="1">Meso-diaminopimelate-adding enzyme</fullName>
    </alternativeName>
    <alternativeName>
        <fullName evidence="1">UDP-MurNAc-L-Ala-D-Glu:meso-diaminopimelate ligase</fullName>
    </alternativeName>
    <alternativeName>
        <fullName evidence="1">UDP-MurNAc-tripeptide synthetase</fullName>
    </alternativeName>
    <alternativeName>
        <fullName evidence="1">UDP-N-acetylmuramyl-tripeptide synthetase</fullName>
    </alternativeName>
</protein>
<comment type="function">
    <text evidence="1">Catalyzes the addition of meso-diaminopimelic acid to the nucleotide precursor UDP-N-acetylmuramoyl-L-alanyl-D-glutamate (UMAG) in the biosynthesis of bacterial cell-wall peptidoglycan.</text>
</comment>
<comment type="catalytic activity">
    <reaction evidence="1">
        <text>UDP-N-acetyl-alpha-D-muramoyl-L-alanyl-D-glutamate + meso-2,6-diaminopimelate + ATP = UDP-N-acetyl-alpha-D-muramoyl-L-alanyl-gamma-D-glutamyl-meso-2,6-diaminopimelate + ADP + phosphate + H(+)</text>
        <dbReference type="Rhea" id="RHEA:23676"/>
        <dbReference type="ChEBI" id="CHEBI:15378"/>
        <dbReference type="ChEBI" id="CHEBI:30616"/>
        <dbReference type="ChEBI" id="CHEBI:43474"/>
        <dbReference type="ChEBI" id="CHEBI:57791"/>
        <dbReference type="ChEBI" id="CHEBI:83900"/>
        <dbReference type="ChEBI" id="CHEBI:83905"/>
        <dbReference type="ChEBI" id="CHEBI:456216"/>
        <dbReference type="EC" id="6.3.2.13"/>
    </reaction>
</comment>
<comment type="cofactor">
    <cofactor evidence="1">
        <name>Mg(2+)</name>
        <dbReference type="ChEBI" id="CHEBI:18420"/>
    </cofactor>
</comment>
<comment type="pathway">
    <text evidence="1">Cell wall biogenesis; peptidoglycan biosynthesis.</text>
</comment>
<comment type="subcellular location">
    <subcellularLocation>
        <location evidence="1">Cytoplasm</location>
    </subcellularLocation>
</comment>
<comment type="PTM">
    <text evidence="1">Carboxylation is probably crucial for Mg(2+) binding and, consequently, for the gamma-phosphate positioning of ATP.</text>
</comment>
<comment type="similarity">
    <text evidence="1">Belongs to the MurCDEF family. MurE subfamily.</text>
</comment>
<evidence type="ECO:0000255" key="1">
    <source>
        <dbReference type="HAMAP-Rule" id="MF_00208"/>
    </source>
</evidence>
<gene>
    <name evidence="1" type="primary">murE</name>
    <name type="ordered locus">NATL1_04641</name>
</gene>
<sequence length="509" mass="56281">MSRYLHTLLKAIDLQVRSGLANPEIKNLSTDSREIEKGDLFLGLDGEKVDGGTFWAKAIERGACAAIISKKASLLNPPTNEDPVVILPEPVSLFMGKLAADFWGKPSSEICLIGITGTNGKTTTSFLIEFLTTSLGHPSALFGTLINRWPNYEETSKYTTTFAVPLQAKLRKAVQAGVEYGAMEVSSHALSQNRVAGCDFNGAIFTNLSRDHLDYHDSMESYFEAKASLFRSHLIDDDGPRSVINIDDKWGSILAKELNKKCWTCSLKENSQIREKPDLYISNLQIMQDGYMGKLHTPFGVGNFISPLIGEFNLMNMLQAIGILVQRGLPLNDLLEALNKFPGVPGRMQLINMDGFKVKDGYPLVIVDYAHTPDGLQNALIASRSLTKKRLICVFGCGGDRDKGKRSKMGEVAAKFADYIVVTSDNPRQEDPIEIIKDIQKGITIDSEISVEPERSIAIQFAIAKAKKNDVVLIAGKGHEDYQILKDQTIYFDDREQARKALSLRTDVI</sequence>
<feature type="chain" id="PRO_1000012374" description="UDP-N-acetylmuramoyl-L-alanyl-D-glutamate--2,6-diaminopimelate ligase">
    <location>
        <begin position="1"/>
        <end position="509"/>
    </location>
</feature>
<feature type="short sequence motif" description="Meso-diaminopimelate recognition motif">
    <location>
        <begin position="425"/>
        <end position="428"/>
    </location>
</feature>
<feature type="binding site" evidence="1">
    <location>
        <position position="32"/>
    </location>
    <ligand>
        <name>UDP-N-acetyl-alpha-D-muramoyl-L-alanyl-D-glutamate</name>
        <dbReference type="ChEBI" id="CHEBI:83900"/>
    </ligand>
</feature>
<feature type="binding site" evidence="1">
    <location>
        <begin position="117"/>
        <end position="123"/>
    </location>
    <ligand>
        <name>ATP</name>
        <dbReference type="ChEBI" id="CHEBI:30616"/>
    </ligand>
</feature>
<feature type="binding site" evidence="1">
    <location>
        <begin position="159"/>
        <end position="160"/>
    </location>
    <ligand>
        <name>UDP-N-acetyl-alpha-D-muramoyl-L-alanyl-D-glutamate</name>
        <dbReference type="ChEBI" id="CHEBI:83900"/>
    </ligand>
</feature>
<feature type="binding site" evidence="1">
    <location>
        <position position="186"/>
    </location>
    <ligand>
        <name>UDP-N-acetyl-alpha-D-muramoyl-L-alanyl-D-glutamate</name>
        <dbReference type="ChEBI" id="CHEBI:83900"/>
    </ligand>
</feature>
<feature type="binding site" evidence="1">
    <location>
        <position position="192"/>
    </location>
    <ligand>
        <name>UDP-N-acetyl-alpha-D-muramoyl-L-alanyl-D-glutamate</name>
        <dbReference type="ChEBI" id="CHEBI:83900"/>
    </ligand>
</feature>
<feature type="binding site" evidence="1">
    <location>
        <position position="194"/>
    </location>
    <ligand>
        <name>UDP-N-acetyl-alpha-D-muramoyl-L-alanyl-D-glutamate</name>
        <dbReference type="ChEBI" id="CHEBI:83900"/>
    </ligand>
</feature>
<feature type="binding site" evidence="1">
    <location>
        <position position="401"/>
    </location>
    <ligand>
        <name>meso-2,6-diaminopimelate</name>
        <dbReference type="ChEBI" id="CHEBI:57791"/>
    </ligand>
</feature>
<feature type="binding site" evidence="1">
    <location>
        <begin position="425"/>
        <end position="428"/>
    </location>
    <ligand>
        <name>meso-2,6-diaminopimelate</name>
        <dbReference type="ChEBI" id="CHEBI:57791"/>
    </ligand>
</feature>
<feature type="binding site" evidence="1">
    <location>
        <position position="476"/>
    </location>
    <ligand>
        <name>meso-2,6-diaminopimelate</name>
        <dbReference type="ChEBI" id="CHEBI:57791"/>
    </ligand>
</feature>
<feature type="binding site" evidence="1">
    <location>
        <position position="480"/>
    </location>
    <ligand>
        <name>meso-2,6-diaminopimelate</name>
        <dbReference type="ChEBI" id="CHEBI:57791"/>
    </ligand>
</feature>
<feature type="modified residue" description="N6-carboxylysine" evidence="1">
    <location>
        <position position="226"/>
    </location>
</feature>
<name>MURE_PROM1</name>
<organism>
    <name type="scientific">Prochlorococcus marinus (strain NATL1A)</name>
    <dbReference type="NCBI Taxonomy" id="167555"/>
    <lineage>
        <taxon>Bacteria</taxon>
        <taxon>Bacillati</taxon>
        <taxon>Cyanobacteriota</taxon>
        <taxon>Cyanophyceae</taxon>
        <taxon>Synechococcales</taxon>
        <taxon>Prochlorococcaceae</taxon>
        <taxon>Prochlorococcus</taxon>
    </lineage>
</organism>
<reference key="1">
    <citation type="journal article" date="2007" name="PLoS Genet.">
        <title>Patterns and implications of gene gain and loss in the evolution of Prochlorococcus.</title>
        <authorList>
            <person name="Kettler G.C."/>
            <person name="Martiny A.C."/>
            <person name="Huang K."/>
            <person name="Zucker J."/>
            <person name="Coleman M.L."/>
            <person name="Rodrigue S."/>
            <person name="Chen F."/>
            <person name="Lapidus A."/>
            <person name="Ferriera S."/>
            <person name="Johnson J."/>
            <person name="Steglich C."/>
            <person name="Church G.M."/>
            <person name="Richardson P."/>
            <person name="Chisholm S.W."/>
        </authorList>
    </citation>
    <scope>NUCLEOTIDE SEQUENCE [LARGE SCALE GENOMIC DNA]</scope>
    <source>
        <strain>NATL1A</strain>
    </source>
</reference>
<accession>A2C0L8</accession>
<dbReference type="EC" id="6.3.2.13" evidence="1"/>
<dbReference type="EMBL" id="CP000553">
    <property type="protein sequence ID" value="ABM75028.1"/>
    <property type="molecule type" value="Genomic_DNA"/>
</dbReference>
<dbReference type="RefSeq" id="WP_011823215.1">
    <property type="nucleotide sequence ID" value="NC_008819.1"/>
</dbReference>
<dbReference type="SMR" id="A2C0L8"/>
<dbReference type="KEGG" id="pme:NATL1_04641"/>
<dbReference type="eggNOG" id="COG0769">
    <property type="taxonomic scope" value="Bacteria"/>
</dbReference>
<dbReference type="HOGENOM" id="CLU_022291_4_1_3"/>
<dbReference type="UniPathway" id="UPA00219"/>
<dbReference type="Proteomes" id="UP000002592">
    <property type="component" value="Chromosome"/>
</dbReference>
<dbReference type="GO" id="GO:0005737">
    <property type="term" value="C:cytoplasm"/>
    <property type="evidence" value="ECO:0007669"/>
    <property type="project" value="UniProtKB-SubCell"/>
</dbReference>
<dbReference type="GO" id="GO:0005524">
    <property type="term" value="F:ATP binding"/>
    <property type="evidence" value="ECO:0007669"/>
    <property type="project" value="UniProtKB-UniRule"/>
</dbReference>
<dbReference type="GO" id="GO:0000287">
    <property type="term" value="F:magnesium ion binding"/>
    <property type="evidence" value="ECO:0007669"/>
    <property type="project" value="UniProtKB-UniRule"/>
</dbReference>
<dbReference type="GO" id="GO:0008765">
    <property type="term" value="F:UDP-N-acetylmuramoylalanyl-D-glutamate-2,6-diaminopimelate ligase activity"/>
    <property type="evidence" value="ECO:0007669"/>
    <property type="project" value="UniProtKB-UniRule"/>
</dbReference>
<dbReference type="GO" id="GO:0051301">
    <property type="term" value="P:cell division"/>
    <property type="evidence" value="ECO:0007669"/>
    <property type="project" value="UniProtKB-KW"/>
</dbReference>
<dbReference type="GO" id="GO:0071555">
    <property type="term" value="P:cell wall organization"/>
    <property type="evidence" value="ECO:0007669"/>
    <property type="project" value="UniProtKB-KW"/>
</dbReference>
<dbReference type="GO" id="GO:0009252">
    <property type="term" value="P:peptidoglycan biosynthetic process"/>
    <property type="evidence" value="ECO:0007669"/>
    <property type="project" value="UniProtKB-UniRule"/>
</dbReference>
<dbReference type="GO" id="GO:0008360">
    <property type="term" value="P:regulation of cell shape"/>
    <property type="evidence" value="ECO:0007669"/>
    <property type="project" value="UniProtKB-KW"/>
</dbReference>
<dbReference type="FunFam" id="3.90.190.20:FF:000006">
    <property type="entry name" value="UDP-N-acetylmuramoyl-L-alanyl-D-glutamate--2,6-diaminopimelate ligase"/>
    <property type="match status" value="1"/>
</dbReference>
<dbReference type="Gene3D" id="3.90.190.20">
    <property type="entry name" value="Mur ligase, C-terminal domain"/>
    <property type="match status" value="1"/>
</dbReference>
<dbReference type="Gene3D" id="3.40.1190.10">
    <property type="entry name" value="Mur-like, catalytic domain"/>
    <property type="match status" value="1"/>
</dbReference>
<dbReference type="Gene3D" id="3.40.1390.10">
    <property type="entry name" value="MurE/MurF, N-terminal domain"/>
    <property type="match status" value="1"/>
</dbReference>
<dbReference type="HAMAP" id="MF_00208">
    <property type="entry name" value="MurE"/>
    <property type="match status" value="1"/>
</dbReference>
<dbReference type="InterPro" id="IPR036565">
    <property type="entry name" value="Mur-like_cat_sf"/>
</dbReference>
<dbReference type="InterPro" id="IPR004101">
    <property type="entry name" value="Mur_ligase_C"/>
</dbReference>
<dbReference type="InterPro" id="IPR036615">
    <property type="entry name" value="Mur_ligase_C_dom_sf"/>
</dbReference>
<dbReference type="InterPro" id="IPR013221">
    <property type="entry name" value="Mur_ligase_cen"/>
</dbReference>
<dbReference type="InterPro" id="IPR000713">
    <property type="entry name" value="Mur_ligase_N"/>
</dbReference>
<dbReference type="InterPro" id="IPR035911">
    <property type="entry name" value="MurE/MurF_N"/>
</dbReference>
<dbReference type="InterPro" id="IPR005761">
    <property type="entry name" value="UDP-N-AcMur-Glu-dNH2Pim_ligase"/>
</dbReference>
<dbReference type="NCBIfam" id="TIGR01085">
    <property type="entry name" value="murE"/>
    <property type="match status" value="1"/>
</dbReference>
<dbReference type="NCBIfam" id="NF001124">
    <property type="entry name" value="PRK00139.1-2"/>
    <property type="match status" value="1"/>
</dbReference>
<dbReference type="NCBIfam" id="NF001126">
    <property type="entry name" value="PRK00139.1-4"/>
    <property type="match status" value="1"/>
</dbReference>
<dbReference type="PANTHER" id="PTHR23135">
    <property type="entry name" value="MUR LIGASE FAMILY MEMBER"/>
    <property type="match status" value="1"/>
</dbReference>
<dbReference type="PANTHER" id="PTHR23135:SF4">
    <property type="entry name" value="UDP-N-ACETYLMURAMOYL-L-ALANYL-D-GLUTAMATE--2,6-DIAMINOPIMELATE LIGASE MURE HOMOLOG, CHLOROPLASTIC"/>
    <property type="match status" value="1"/>
</dbReference>
<dbReference type="Pfam" id="PF01225">
    <property type="entry name" value="Mur_ligase"/>
    <property type="match status" value="1"/>
</dbReference>
<dbReference type="Pfam" id="PF02875">
    <property type="entry name" value="Mur_ligase_C"/>
    <property type="match status" value="1"/>
</dbReference>
<dbReference type="Pfam" id="PF08245">
    <property type="entry name" value="Mur_ligase_M"/>
    <property type="match status" value="1"/>
</dbReference>
<dbReference type="SUPFAM" id="SSF53623">
    <property type="entry name" value="MurD-like peptide ligases, catalytic domain"/>
    <property type="match status" value="1"/>
</dbReference>
<dbReference type="SUPFAM" id="SSF53244">
    <property type="entry name" value="MurD-like peptide ligases, peptide-binding domain"/>
    <property type="match status" value="1"/>
</dbReference>
<dbReference type="SUPFAM" id="SSF63418">
    <property type="entry name" value="MurE/MurF N-terminal domain"/>
    <property type="match status" value="1"/>
</dbReference>